<evidence type="ECO:0000269" key="1">
    <source ref="1"/>
</evidence>
<evidence type="ECO:0000305" key="2"/>
<sequence length="9" mass="1077">AMRNALVRF</sequence>
<accession>P82661</accession>
<keyword id="KW-0027">Amidation</keyword>
<keyword id="KW-0903">Direct protein sequencing</keyword>
<keyword id="KW-0527">Neuropeptide</keyword>
<keyword id="KW-1185">Reference proteome</keyword>
<keyword id="KW-0964">Secreted</keyword>
<reference key="1">
    <citation type="submission" date="2000-07" db="UniProtKB">
        <title>Isolation, characterization and pharmacology of FMRFamide-related peptides (FaRPs) from free-living nematode, Panagrellus redivivus.</title>
        <authorList>
            <person name="Moffet C.L."/>
            <person name="Marks N.J."/>
            <person name="Halton D.W."/>
            <person name="Thomson D.P."/>
            <person name="Geary T.G."/>
            <person name="Maule A.G."/>
        </authorList>
    </citation>
    <scope>PROTEIN SEQUENCE</scope>
    <scope>FUNCTION</scope>
    <scope>AMIDATION AT PHE-9</scope>
</reference>
<feature type="peptide" id="PRO_0000043710" description="FMRFamide-like neuropeptide PF5">
    <location>
        <begin position="1"/>
        <end position="9"/>
    </location>
</feature>
<feature type="modified residue" description="Phenylalanine amide" evidence="1">
    <location>
        <position position="9"/>
    </location>
</feature>
<dbReference type="Proteomes" id="UP000492821">
    <property type="component" value="Unplaced"/>
</dbReference>
<dbReference type="GO" id="GO:0005576">
    <property type="term" value="C:extracellular region"/>
    <property type="evidence" value="ECO:0007669"/>
    <property type="project" value="UniProtKB-SubCell"/>
</dbReference>
<dbReference type="GO" id="GO:0007218">
    <property type="term" value="P:neuropeptide signaling pathway"/>
    <property type="evidence" value="ECO:0007669"/>
    <property type="project" value="UniProtKB-KW"/>
</dbReference>
<comment type="function">
    <text evidence="1">Myoactive.</text>
</comment>
<comment type="subcellular location">
    <subcellularLocation>
        <location>Secreted</location>
    </subcellularLocation>
</comment>
<comment type="similarity">
    <text evidence="2">Belongs to the FARP (FMRFamide related peptide) family.</text>
</comment>
<name>FAR5_PANRE</name>
<proteinExistence type="evidence at protein level"/>
<organism>
    <name type="scientific">Panagrellus redivivus</name>
    <name type="common">Microworm</name>
    <dbReference type="NCBI Taxonomy" id="6233"/>
    <lineage>
        <taxon>Eukaryota</taxon>
        <taxon>Metazoa</taxon>
        <taxon>Ecdysozoa</taxon>
        <taxon>Nematoda</taxon>
        <taxon>Chromadorea</taxon>
        <taxon>Rhabditida</taxon>
        <taxon>Tylenchina</taxon>
        <taxon>Panagrolaimomorpha</taxon>
        <taxon>Panagrolaimoidea</taxon>
        <taxon>Panagrolaimidae</taxon>
        <taxon>Panagrellus</taxon>
    </lineage>
</organism>
<protein>
    <recommendedName>
        <fullName>FMRFamide-like neuropeptide PF5</fullName>
    </recommendedName>
    <alternativeName>
        <fullName>AMRNALVRF-amide</fullName>
    </alternativeName>
</protein>